<feature type="signal peptide" evidence="3">
    <location>
        <begin position="1"/>
        <end position="30"/>
    </location>
</feature>
<feature type="propeptide" id="PRO_0000251791" description="Cathelin-like domain (CLD)" evidence="1">
    <location>
        <begin position="31"/>
        <end position="131"/>
    </location>
</feature>
<feature type="chain" id="PRO_0000251792" description="Antibacterial peptide FALL-39" evidence="1">
    <location>
        <begin position="132"/>
        <end position="170"/>
    </location>
</feature>
<feature type="chain" id="PRO_0000251793" description="Antibacterial peptide LL-37" evidence="1">
    <location>
        <begin position="134"/>
        <end position="170"/>
    </location>
</feature>
<feature type="region of interest" description="Cathelin-like domain (CLD)" evidence="1">
    <location>
        <begin position="31"/>
        <end position="131"/>
    </location>
</feature>
<feature type="region of interest" description="Active core" evidence="1">
    <location>
        <begin position="150"/>
        <end position="162"/>
    </location>
</feature>
<feature type="disulfide bond" evidence="1">
    <location>
        <begin position="86"/>
        <end position="97"/>
    </location>
</feature>
<feature type="disulfide bond" evidence="1">
    <location>
        <begin position="108"/>
        <end position="125"/>
    </location>
</feature>
<comment type="function">
    <text evidence="1">Antimicrobial protein that is an integral component of the innate immune system (By similarity). Binds to bacterial lipopolysaccharides (LPS) (By similarity). Acts via neutrophil N-formyl peptide receptors to enhance the release of CXCL2 (By similarity). Postsecretory processing generates multiple cathelicidin antimicrobial peptides with various lengths which act as a topical antimicrobial defense in sweat on skin (By similarity). The unprocessed precursor form, cathelicidin antimicrobial peptide, inhibits the growth of Gram-negative E.coli and E.aerogenes with efficiencies comparable to that of the mature peptide LL-37 (in vitro) (By similarity).</text>
</comment>
<comment type="function">
    <molecule>Antibacterial peptide LL-37</molecule>
    <text evidence="1">Antimicrobial peptide that is an integral component of the innate immune system (By similarity). Binds to bacterial lipopolysaccharides (LPS) (By similarity). Causes membrane permeabilization by forming transmembrane pores (in vitro) (By similarity). Causes lysis of E.coli (By similarity). Exhibits antimicrobial activity against Gram-negative bacteria such as P.aeruginosa, S.typhimurium, E.aerogenes, E.coli and P.syringae, Gram-positive bacteria such as L.monocytogenes, S.epidermidis, S.pyogenes and S.aureus, as well as vancomycin-resistant enterococci (in vitro) (By similarity). Exhibits antimicrobial activity against methicillin-resistant S.aureus, P.mirabilis, and C.albicans in low-salt media, but not in media containing 100 mM NaCl (in vitro) (By similarity). Forms chiral supramolecular assemblies with quinolone signal (PQS) molecules of P.aeruginosa, which may lead to interference of bacterial quorum signaling and perturbance of bacterial biofilm formation (By similarity). May form supramolecular fiber-like assemblies on bacterial membranes (By similarity). Induces cytokine and chemokine producation as well as TNF/TNFA and CSF2/GMCSF production in normal human keratinocytes (By similarity). Exhibits hemolytic activity against red blood cells (By similarity).</text>
</comment>
<comment type="function">
    <molecule>Antibacterial peptide FALL-39</molecule>
    <text evidence="1">Exhibits antimicrobial activity against E.coli and B.megaterium (in vitro).</text>
</comment>
<comment type="subunit">
    <molecule>Antibacterial peptide LL-37</molecule>
    <text evidence="1">Monomer, homodimer or homotrimer (in vitro) (By similarity). Oligomerizes as tetra- or hexamer in solution (in vitro) (By similarity).</text>
</comment>
<comment type="subcellular location">
    <subcellularLocation>
        <location evidence="2">Secreted</location>
    </subcellularLocation>
    <subcellularLocation>
        <location evidence="2">Vesicle</location>
    </subcellularLocation>
    <text evidence="2">Stored as pro-peptide in granules and phagolysosomes of neutrophils (By similarity). Secreted in sweat onto skin (By similarity).</text>
</comment>
<comment type="domain">
    <text evidence="2">The cathelin-like domain (CLD), which is the propeptide part, does not seem to exhibit auto-inhibitory function, as it does not inhibit the antibacterial activity of antibacterial peptide LL-37.</text>
</comment>
<comment type="domain">
    <molecule>Antibacterial peptide LL-37</molecule>
    <text evidence="2">Undergoes conformational change in the presence of lipid A, transitioning from a random coil to an alpha-helical structure.</text>
</comment>
<comment type="domain">
    <molecule>Antibacterial peptide LL-37</molecule>
    <text evidence="2">Residues 17-29 of LL-37 represent the active core of the antimicrobial peptide. Forms ribbon-like fibrils and exhibits antibacterial activity against Gram-positive M.luteus (By similarity). Also exhibits antibacterial activity against Gram-negative E.coli and P.fluorescens (By similarity).</text>
</comment>
<comment type="PTM">
    <text evidence="1">Proteolytically cleaved by proteinase PRTN3 into antibacterial peptide LL-37 (By similarity). Proteolytically cleaved by cathepsin CTSG and neutrophil elastase ELANE (By similarity).</text>
</comment>
<comment type="PTM">
    <molecule>Antibacterial peptide LL-37</molecule>
    <text evidence="1">Resistant to proteolytic degradation in solution, and when bound to both zwitterionic (mimicking mammalian membranes) and negatively charged membranes (mimicking bacterial membranes).</text>
</comment>
<comment type="PTM">
    <text evidence="1">After secretion onto the skin surface, the CAMP gene product is processed by a serine protease-dependent mechanism into multiple novel antimicrobial peptides distinct from and shorter than cathelicidin LL-37 (By similarity). These peptides show enhanced antimicrobial action, acquiring the ability to kill skin pathogens such as S.aureus, E.coli and C.albicans. These peptides have lost the ability to stimulate CXCL8/IL8 release from keratinocytes (By similarity). The peptides act synergistically, killing bacteria at lower concentrations when present together, and maintain activity at increased salt condition (By similarity).</text>
</comment>
<comment type="similarity">
    <text evidence="4">Belongs to the cathelicidin family.</text>
</comment>
<accession>Q1KLX0</accession>
<proteinExistence type="inferred from homology"/>
<dbReference type="EMBL" id="DQ471372">
    <property type="protein sequence ID" value="ABE96636.1"/>
    <property type="molecule type" value="Genomic_DNA"/>
</dbReference>
<dbReference type="SMR" id="Q1KLX0"/>
<dbReference type="GO" id="GO:0005615">
    <property type="term" value="C:extracellular space"/>
    <property type="evidence" value="ECO:0007669"/>
    <property type="project" value="TreeGrafter"/>
</dbReference>
<dbReference type="GO" id="GO:0031982">
    <property type="term" value="C:vesicle"/>
    <property type="evidence" value="ECO:0007669"/>
    <property type="project" value="UniProtKB-SubCell"/>
</dbReference>
<dbReference type="GO" id="GO:0001530">
    <property type="term" value="F:lipopolysaccharide binding"/>
    <property type="evidence" value="ECO:0007669"/>
    <property type="project" value="TreeGrafter"/>
</dbReference>
<dbReference type="GO" id="GO:0061844">
    <property type="term" value="P:antimicrobial humoral immune response mediated by antimicrobial peptide"/>
    <property type="evidence" value="ECO:0007669"/>
    <property type="project" value="TreeGrafter"/>
</dbReference>
<dbReference type="GO" id="GO:0050829">
    <property type="term" value="P:defense response to Gram-negative bacterium"/>
    <property type="evidence" value="ECO:0007669"/>
    <property type="project" value="TreeGrafter"/>
</dbReference>
<dbReference type="GO" id="GO:0050830">
    <property type="term" value="P:defense response to Gram-positive bacterium"/>
    <property type="evidence" value="ECO:0007669"/>
    <property type="project" value="TreeGrafter"/>
</dbReference>
<dbReference type="GO" id="GO:0045087">
    <property type="term" value="P:innate immune response"/>
    <property type="evidence" value="ECO:0007669"/>
    <property type="project" value="UniProtKB-KW"/>
</dbReference>
<dbReference type="GO" id="GO:0042119">
    <property type="term" value="P:neutrophil activation"/>
    <property type="evidence" value="ECO:0000250"/>
    <property type="project" value="UniProtKB"/>
</dbReference>
<dbReference type="FunFam" id="3.10.450.10:FF:000003">
    <property type="entry name" value="Cathelicidin antimicrobial peptide"/>
    <property type="match status" value="1"/>
</dbReference>
<dbReference type="Gene3D" id="3.10.450.10">
    <property type="match status" value="1"/>
</dbReference>
<dbReference type="InterPro" id="IPR001894">
    <property type="entry name" value="Cathelicidin-like"/>
</dbReference>
<dbReference type="InterPro" id="IPR018216">
    <property type="entry name" value="Cathelicidin_CS"/>
</dbReference>
<dbReference type="InterPro" id="IPR022746">
    <property type="entry name" value="Cathlecidin_C"/>
</dbReference>
<dbReference type="InterPro" id="IPR046350">
    <property type="entry name" value="Cystatin_sf"/>
</dbReference>
<dbReference type="PANTHER" id="PTHR10206">
    <property type="entry name" value="CATHELICIDIN"/>
    <property type="match status" value="1"/>
</dbReference>
<dbReference type="PANTHER" id="PTHR10206:SF2">
    <property type="entry name" value="CATHELICIDIN ANTIMICROBIAL PEPTIDE"/>
    <property type="match status" value="1"/>
</dbReference>
<dbReference type="Pfam" id="PF12153">
    <property type="entry name" value="CAP18_C"/>
    <property type="match status" value="1"/>
</dbReference>
<dbReference type="Pfam" id="PF00666">
    <property type="entry name" value="Cathelicidins"/>
    <property type="match status" value="1"/>
</dbReference>
<dbReference type="SUPFAM" id="SSF54403">
    <property type="entry name" value="Cystatin/monellin"/>
    <property type="match status" value="1"/>
</dbReference>
<dbReference type="PROSITE" id="PS00946">
    <property type="entry name" value="CATHELICIDINS_1"/>
    <property type="match status" value="1"/>
</dbReference>
<dbReference type="PROSITE" id="PS00947">
    <property type="entry name" value="CATHELICIDINS_2"/>
    <property type="match status" value="1"/>
</dbReference>
<name>CAMP_SAGOE</name>
<protein>
    <recommendedName>
        <fullName evidence="1">Cathelicidin antimicrobial peptide</fullName>
    </recommendedName>
    <component>
        <recommendedName>
            <fullName evidence="1">Antibacterial peptide FALL-39</fullName>
        </recommendedName>
        <alternativeName>
            <fullName evidence="1">FALL-39 peptide antibiotic</fullName>
        </alternativeName>
    </component>
    <component>
        <recommendedName>
            <fullName evidence="1">Antibacterial peptide LL-37</fullName>
        </recommendedName>
    </component>
</protein>
<evidence type="ECO:0000250" key="1">
    <source>
        <dbReference type="UniProtKB" id="P49913"/>
    </source>
</evidence>
<evidence type="ECO:0000250" key="2">
    <source>
        <dbReference type="UniProtKB" id="P54229"/>
    </source>
</evidence>
<evidence type="ECO:0000255" key="3"/>
<evidence type="ECO:0000305" key="4"/>
<sequence>MKTQRDGPSLGRWSLLLLLLGLTMPLAVIGRVLSYQEAVLRAVDGLNQRSSDANLYRLLNLDPRPTMDGDPDTPKPVSFTVKETVCPRTIQRSPEECDFKEDGLVKWCVGTVTLNQAKDSFDISCDKDKRKVARLGGILRKAGEKIGGGLKKIGQKIKDFFGKLAPRTES</sequence>
<reference key="1">
    <citation type="journal article" date="2006" name="J. Biol. Chem.">
        <title>Evolution of the primate cathelicidin. Correlation between structural variations and antimicrobial activity.</title>
        <authorList>
            <person name="Zelezetsky I."/>
            <person name="Pontillo A."/>
            <person name="Puzzi L."/>
            <person name="Antcheva N."/>
            <person name="Segat L."/>
            <person name="Pacor S."/>
            <person name="Crovella S."/>
            <person name="Tossi A."/>
        </authorList>
    </citation>
    <scope>NUCLEOTIDE SEQUENCE [GENOMIC DNA]</scope>
</reference>
<organism>
    <name type="scientific">Saguinus oedipus</name>
    <name type="common">Cotton-top tamarin</name>
    <dbReference type="NCBI Taxonomy" id="9490"/>
    <lineage>
        <taxon>Eukaryota</taxon>
        <taxon>Metazoa</taxon>
        <taxon>Chordata</taxon>
        <taxon>Craniata</taxon>
        <taxon>Vertebrata</taxon>
        <taxon>Euteleostomi</taxon>
        <taxon>Mammalia</taxon>
        <taxon>Eutheria</taxon>
        <taxon>Euarchontoglires</taxon>
        <taxon>Primates</taxon>
        <taxon>Haplorrhini</taxon>
        <taxon>Platyrrhini</taxon>
        <taxon>Cebidae</taxon>
        <taxon>Callitrichinae</taxon>
        <taxon>Saguinus</taxon>
    </lineage>
</organism>
<gene>
    <name evidence="1" type="primary">CAMP</name>
</gene>
<keyword id="KW-0044">Antibiotic</keyword>
<keyword id="KW-0929">Antimicrobial</keyword>
<keyword id="KW-0165">Cleavage on pair of basic residues</keyword>
<keyword id="KW-1015">Disulfide bond</keyword>
<keyword id="KW-0391">Immunity</keyword>
<keyword id="KW-0399">Innate immunity</keyword>
<keyword id="KW-0964">Secreted</keyword>
<keyword id="KW-0732">Signal</keyword>